<keyword id="KW-0007">Acetylation</keyword>
<keyword id="KW-0210">Decarboxylase</keyword>
<keyword id="KW-0325">Glycoprotein</keyword>
<keyword id="KW-0333">Golgi apparatus</keyword>
<keyword id="KW-0456">Lyase</keyword>
<keyword id="KW-0472">Membrane</keyword>
<keyword id="KW-0520">NAD</keyword>
<keyword id="KW-0597">Phosphoprotein</keyword>
<keyword id="KW-1185">Reference proteome</keyword>
<keyword id="KW-0735">Signal-anchor</keyword>
<keyword id="KW-0812">Transmembrane</keyword>
<keyword id="KW-1133">Transmembrane helix</keyword>
<feature type="chain" id="PRO_0000183272" description="UDP-glucuronic acid decarboxylase 1">
    <location>
        <begin position="1"/>
        <end position="420"/>
    </location>
</feature>
<feature type="topological domain" description="Cytoplasmic" evidence="2">
    <location>
        <begin position="1"/>
        <end position="19"/>
    </location>
</feature>
<feature type="transmembrane region" description="Helical; Signal-anchor for type II membrane protein" evidence="2">
    <location>
        <begin position="20"/>
        <end position="40"/>
    </location>
</feature>
<feature type="topological domain" description="Lumenal" evidence="2">
    <location>
        <begin position="41"/>
        <end position="420"/>
    </location>
</feature>
<feature type="active site" description="Proton acceptor" evidence="1">
    <location>
        <position position="231"/>
    </location>
</feature>
<feature type="binding site" evidence="1">
    <location>
        <position position="98"/>
    </location>
    <ligand>
        <name>NAD(+)</name>
        <dbReference type="ChEBI" id="CHEBI:57540"/>
    </ligand>
</feature>
<feature type="binding site" evidence="1">
    <location>
        <position position="99"/>
    </location>
    <ligand>
        <name>NAD(+)</name>
        <dbReference type="ChEBI" id="CHEBI:57540"/>
    </ligand>
</feature>
<feature type="binding site" evidence="1">
    <location>
        <position position="100"/>
    </location>
    <ligand>
        <name>NAD(+)</name>
        <dbReference type="ChEBI" id="CHEBI:57540"/>
    </ligand>
</feature>
<feature type="binding site" evidence="1">
    <location>
        <position position="119"/>
    </location>
    <ligand>
        <name>NAD(+)</name>
        <dbReference type="ChEBI" id="CHEBI:57540"/>
    </ligand>
</feature>
<feature type="binding site" evidence="1">
    <location>
        <position position="120"/>
    </location>
    <ligand>
        <name>NAD(+)</name>
        <dbReference type="ChEBI" id="CHEBI:57540"/>
    </ligand>
</feature>
<feature type="binding site" evidence="1">
    <location>
        <position position="122"/>
    </location>
    <ligand>
        <name>NAD(+)</name>
        <dbReference type="ChEBI" id="CHEBI:57540"/>
    </ligand>
</feature>
<feature type="binding site" evidence="1">
    <location>
        <position position="123"/>
    </location>
    <ligand>
        <name>NAD(+)</name>
        <dbReference type="ChEBI" id="CHEBI:57540"/>
    </ligand>
</feature>
<feature type="binding site" evidence="1">
    <location>
        <position position="124"/>
    </location>
    <ligand>
        <name>NAD(+)</name>
        <dbReference type="ChEBI" id="CHEBI:57540"/>
    </ligand>
</feature>
<feature type="binding site" evidence="1">
    <location>
        <position position="144"/>
    </location>
    <ligand>
        <name>NAD(+)</name>
        <dbReference type="ChEBI" id="CHEBI:57540"/>
    </ligand>
</feature>
<feature type="binding site" evidence="1">
    <location>
        <position position="145"/>
    </location>
    <ligand>
        <name>NAD(+)</name>
        <dbReference type="ChEBI" id="CHEBI:57540"/>
    </ligand>
</feature>
<feature type="binding site" evidence="1">
    <location>
        <position position="149"/>
    </location>
    <ligand>
        <name>UDP-alpha-D-glucuronate</name>
        <dbReference type="ChEBI" id="CHEBI:58052"/>
    </ligand>
</feature>
<feature type="binding site" evidence="1">
    <location>
        <position position="150"/>
    </location>
    <ligand>
        <name>UDP-alpha-D-glucuronate</name>
        <dbReference type="ChEBI" id="CHEBI:58052"/>
    </ligand>
</feature>
<feature type="binding site" evidence="1">
    <location>
        <position position="159"/>
    </location>
    <ligand>
        <name>NAD(+)</name>
        <dbReference type="ChEBI" id="CHEBI:57540"/>
    </ligand>
</feature>
<feature type="binding site" evidence="1">
    <location>
        <position position="161"/>
    </location>
    <ligand>
        <name>NAD(+)</name>
        <dbReference type="ChEBI" id="CHEBI:57540"/>
    </ligand>
</feature>
<feature type="binding site" evidence="1">
    <location>
        <position position="177"/>
    </location>
    <ligand>
        <name>UDP-alpha-D-glucuronate</name>
        <dbReference type="ChEBI" id="CHEBI:58052"/>
    </ligand>
</feature>
<feature type="binding site" evidence="1">
    <location>
        <position position="178"/>
    </location>
    <ligand>
        <name>NAD(+)</name>
        <dbReference type="ChEBI" id="CHEBI:57540"/>
    </ligand>
</feature>
<feature type="binding site" evidence="1">
    <location>
        <position position="185"/>
    </location>
    <ligand>
        <name>UDP-alpha-D-glucuronate</name>
        <dbReference type="ChEBI" id="CHEBI:58052"/>
    </ligand>
</feature>
<feature type="binding site" evidence="1">
    <location>
        <position position="188"/>
    </location>
    <ligand>
        <name>UDP-alpha-D-glucuronate</name>
        <dbReference type="ChEBI" id="CHEBI:58052"/>
    </ligand>
</feature>
<feature type="binding site" evidence="1">
    <location>
        <position position="191"/>
    </location>
    <ligand>
        <name>UDP-alpha-D-glucuronate</name>
        <dbReference type="ChEBI" id="CHEBI:58052"/>
    </ligand>
</feature>
<feature type="binding site" evidence="1">
    <location>
        <position position="192"/>
    </location>
    <ligand>
        <name>UDP-alpha-D-glucuronate</name>
        <dbReference type="ChEBI" id="CHEBI:58052"/>
    </ligand>
</feature>
<feature type="binding site" evidence="1">
    <location>
        <position position="200"/>
    </location>
    <ligand>
        <name>NAD(+)</name>
        <dbReference type="ChEBI" id="CHEBI:57540"/>
    </ligand>
</feature>
<feature type="binding site" evidence="1">
    <location>
        <position position="231"/>
    </location>
    <ligand>
        <name>NAD(+)</name>
        <dbReference type="ChEBI" id="CHEBI:57540"/>
    </ligand>
</feature>
<feature type="binding site" evidence="1">
    <location>
        <position position="235"/>
    </location>
    <ligand>
        <name>NAD(+)</name>
        <dbReference type="ChEBI" id="CHEBI:57540"/>
    </ligand>
</feature>
<feature type="binding site" evidence="1">
    <location>
        <position position="245"/>
    </location>
    <ligand>
        <name>UDP-alpha-D-glucuronate</name>
        <dbReference type="ChEBI" id="CHEBI:58052"/>
    </ligand>
</feature>
<feature type="binding site" evidence="1">
    <location>
        <position position="248"/>
    </location>
    <ligand>
        <name>UDP-alpha-D-glucuronate</name>
        <dbReference type="ChEBI" id="CHEBI:58052"/>
    </ligand>
</feature>
<feature type="binding site" evidence="1">
    <location>
        <position position="249"/>
    </location>
    <ligand>
        <name>UDP-alpha-D-glucuronate</name>
        <dbReference type="ChEBI" id="CHEBI:58052"/>
    </ligand>
</feature>
<feature type="binding site" evidence="1">
    <location>
        <position position="261"/>
    </location>
    <ligand>
        <name>NAD(+)</name>
        <dbReference type="ChEBI" id="CHEBI:57540"/>
    </ligand>
</feature>
<feature type="binding site" evidence="1">
    <location>
        <position position="267"/>
    </location>
    <ligand>
        <name>NAD(+)</name>
        <dbReference type="ChEBI" id="CHEBI:57540"/>
    </ligand>
</feature>
<feature type="binding site" evidence="1">
    <location>
        <position position="272"/>
    </location>
    <ligand>
        <name>NAD(+)</name>
        <dbReference type="ChEBI" id="CHEBI:57540"/>
    </ligand>
</feature>
<feature type="modified residue" description="N-acetylmethionine" evidence="1">
    <location>
        <position position="1"/>
    </location>
</feature>
<feature type="modified residue" description="Phosphothreonine" evidence="1">
    <location>
        <position position="94"/>
    </location>
</feature>
<feature type="glycosylation site" description="N-linked (GlcNAc...) asparagine" evidence="2">
    <location>
        <position position="316"/>
    </location>
</feature>
<feature type="sequence conflict" description="In Ref. 1; AAM45939." evidence="5" ref="1">
    <original>I</original>
    <variation>T</variation>
    <location>
        <position position="55"/>
    </location>
</feature>
<feature type="sequence conflict" description="In Ref. 1; AAM45939." evidence="5" ref="1">
    <original>EVT</original>
    <variation>DVS</variation>
    <location>
        <begin position="114"/>
        <end position="116"/>
    </location>
</feature>
<feature type="sequence conflict" description="In Ref. 1; AAM45939." evidence="5" ref="1">
    <original>Q</original>
    <variation>E</variation>
    <location>
        <position position="336"/>
    </location>
</feature>
<dbReference type="EC" id="4.1.1.35" evidence="3"/>
<dbReference type="EMBL" id="AF482705">
    <property type="protein sequence ID" value="AAM45939.1"/>
    <property type="molecule type" value="mRNA"/>
</dbReference>
<dbReference type="EMBL" id="BC086988">
    <property type="protein sequence ID" value="AAH86988.1"/>
    <property type="molecule type" value="mRNA"/>
</dbReference>
<dbReference type="RefSeq" id="NP_647552.2">
    <property type="nucleotide sequence ID" value="NM_139336.2"/>
</dbReference>
<dbReference type="SMR" id="Q5PQX0"/>
<dbReference type="BioGRID" id="251537">
    <property type="interactions" value="1"/>
</dbReference>
<dbReference type="FunCoup" id="Q5PQX0">
    <property type="interactions" value="1901"/>
</dbReference>
<dbReference type="STRING" id="10116.ENSRNOP00000070855"/>
<dbReference type="GlyCosmos" id="Q5PQX0">
    <property type="glycosylation" value="1 site, No reported glycans"/>
</dbReference>
<dbReference type="GlyGen" id="Q5PQX0">
    <property type="glycosylation" value="1 site"/>
</dbReference>
<dbReference type="PhosphoSitePlus" id="Q5PQX0"/>
<dbReference type="PaxDb" id="10116-ENSRNOP00000066044"/>
<dbReference type="GeneID" id="246232"/>
<dbReference type="KEGG" id="rno:246232"/>
<dbReference type="AGR" id="RGD:628680"/>
<dbReference type="CTD" id="80146"/>
<dbReference type="RGD" id="628680">
    <property type="gene designation" value="Uxs1"/>
</dbReference>
<dbReference type="VEuPathDB" id="HostDB:ENSRNOG00000045605"/>
<dbReference type="eggNOG" id="KOG1429">
    <property type="taxonomic scope" value="Eukaryota"/>
</dbReference>
<dbReference type="HOGENOM" id="CLU_007383_4_3_1"/>
<dbReference type="InParanoid" id="Q5PQX0"/>
<dbReference type="PhylomeDB" id="Q5PQX0"/>
<dbReference type="BRENDA" id="4.1.1.35">
    <property type="organism ID" value="5301"/>
</dbReference>
<dbReference type="Reactome" id="R-RNO-173599">
    <property type="pathway name" value="Formation of the active cofactor, UDP-glucuronate"/>
</dbReference>
<dbReference type="Reactome" id="R-RNO-1971475">
    <property type="pathway name" value="A tetrasaccharide linker sequence is required for GAG synthesis"/>
</dbReference>
<dbReference type="UniPathway" id="UPA00796">
    <property type="reaction ID" value="UER00771"/>
</dbReference>
<dbReference type="PRO" id="PR:Q5PQX0"/>
<dbReference type="Proteomes" id="UP000002494">
    <property type="component" value="Chromosome 9"/>
</dbReference>
<dbReference type="Bgee" id="ENSRNOG00000045605">
    <property type="expression patterns" value="Expressed in ovary and 20 other cell types or tissues"/>
</dbReference>
<dbReference type="GO" id="GO:1902494">
    <property type="term" value="C:catalytic complex"/>
    <property type="evidence" value="ECO:0000266"/>
    <property type="project" value="RGD"/>
</dbReference>
<dbReference type="GO" id="GO:0005737">
    <property type="term" value="C:cytoplasm"/>
    <property type="evidence" value="ECO:0000318"/>
    <property type="project" value="GO_Central"/>
</dbReference>
<dbReference type="GO" id="GO:0032580">
    <property type="term" value="C:Golgi cisterna membrane"/>
    <property type="evidence" value="ECO:0007669"/>
    <property type="project" value="UniProtKB-SubCell"/>
</dbReference>
<dbReference type="GO" id="GO:0000139">
    <property type="term" value="C:Golgi membrane"/>
    <property type="evidence" value="ECO:0000314"/>
    <property type="project" value="FlyBase"/>
</dbReference>
<dbReference type="GO" id="GO:0042802">
    <property type="term" value="F:identical protein binding"/>
    <property type="evidence" value="ECO:0000266"/>
    <property type="project" value="RGD"/>
</dbReference>
<dbReference type="GO" id="GO:0070403">
    <property type="term" value="F:NAD+ binding"/>
    <property type="evidence" value="ECO:0000266"/>
    <property type="project" value="RGD"/>
</dbReference>
<dbReference type="GO" id="GO:0042803">
    <property type="term" value="F:protein homodimerization activity"/>
    <property type="evidence" value="ECO:0000266"/>
    <property type="project" value="RGD"/>
</dbReference>
<dbReference type="GO" id="GO:0048040">
    <property type="term" value="F:UDP-glucuronate decarboxylase activity"/>
    <property type="evidence" value="ECO:0000314"/>
    <property type="project" value="RGD"/>
</dbReference>
<dbReference type="GO" id="GO:0042732">
    <property type="term" value="P:D-xylose metabolic process"/>
    <property type="evidence" value="ECO:0007669"/>
    <property type="project" value="InterPro"/>
</dbReference>
<dbReference type="GO" id="GO:0033320">
    <property type="term" value="P:UDP-D-xylose biosynthetic process"/>
    <property type="evidence" value="ECO:0000266"/>
    <property type="project" value="RGD"/>
</dbReference>
<dbReference type="CDD" id="cd05230">
    <property type="entry name" value="UGD_SDR_e"/>
    <property type="match status" value="1"/>
</dbReference>
<dbReference type="FunFam" id="3.40.50.720:FF:000065">
    <property type="entry name" value="UDP-glucuronic acid decarboxylase 1"/>
    <property type="match status" value="1"/>
</dbReference>
<dbReference type="Gene3D" id="3.40.50.720">
    <property type="entry name" value="NAD(P)-binding Rossmann-like Domain"/>
    <property type="match status" value="2"/>
</dbReference>
<dbReference type="InterPro" id="IPR016040">
    <property type="entry name" value="NAD(P)-bd_dom"/>
</dbReference>
<dbReference type="InterPro" id="IPR036291">
    <property type="entry name" value="NAD(P)-bd_dom_sf"/>
</dbReference>
<dbReference type="InterPro" id="IPR044516">
    <property type="entry name" value="UXS-like"/>
</dbReference>
<dbReference type="InterPro" id="IPR021761">
    <property type="entry name" value="UXS1_N"/>
</dbReference>
<dbReference type="PANTHER" id="PTHR43078:SF6">
    <property type="entry name" value="UDP-GLUCURONIC ACID DECARBOXYLASE 1"/>
    <property type="match status" value="1"/>
</dbReference>
<dbReference type="PANTHER" id="PTHR43078">
    <property type="entry name" value="UDP-GLUCURONIC ACID DECARBOXYLASE-RELATED"/>
    <property type="match status" value="1"/>
</dbReference>
<dbReference type="Pfam" id="PF16363">
    <property type="entry name" value="GDP_Man_Dehyd"/>
    <property type="match status" value="1"/>
</dbReference>
<dbReference type="Pfam" id="PF11803">
    <property type="entry name" value="UXS1_N"/>
    <property type="match status" value="1"/>
</dbReference>
<dbReference type="SUPFAM" id="SSF51735">
    <property type="entry name" value="NAD(P)-binding Rossmann-fold domains"/>
    <property type="match status" value="1"/>
</dbReference>
<proteinExistence type="evidence at protein level"/>
<evidence type="ECO:0000250" key="1">
    <source>
        <dbReference type="UniProtKB" id="Q8NBZ7"/>
    </source>
</evidence>
<evidence type="ECO:0000255" key="2"/>
<evidence type="ECO:0000269" key="3">
    <source>
    </source>
</evidence>
<evidence type="ECO:0000303" key="4">
    <source>
    </source>
</evidence>
<evidence type="ECO:0000305" key="5"/>
<evidence type="ECO:0000305" key="6">
    <source>
    </source>
</evidence>
<evidence type="ECO:0000312" key="7">
    <source>
        <dbReference type="RGD" id="628680"/>
    </source>
</evidence>
<comment type="function">
    <text evidence="3">Catalyzes the NAD-dependent decarboxylation of UDP-glucuronic acid to UDP-xylose (PubMed:11877387). Necessary for the biosynthesis of the core tetrasaccharide in glycosaminoglycan biosynthesis (PubMed:11877387).</text>
</comment>
<comment type="catalytic activity">
    <reaction evidence="3">
        <text>UDP-alpha-D-glucuronate + H(+) = UDP-alpha-D-xylose + CO2</text>
        <dbReference type="Rhea" id="RHEA:23916"/>
        <dbReference type="ChEBI" id="CHEBI:15378"/>
        <dbReference type="ChEBI" id="CHEBI:16526"/>
        <dbReference type="ChEBI" id="CHEBI:57632"/>
        <dbReference type="ChEBI" id="CHEBI:58052"/>
        <dbReference type="EC" id="4.1.1.35"/>
    </reaction>
    <physiologicalReaction direction="left-to-right" evidence="6">
        <dbReference type="Rhea" id="RHEA:23917"/>
    </physiologicalReaction>
</comment>
<comment type="cofactor">
    <cofactor evidence="1">
        <name>NAD(+)</name>
        <dbReference type="ChEBI" id="CHEBI:57540"/>
    </cofactor>
</comment>
<comment type="pathway">
    <text evidence="6">Nucleotide-sugar biosynthesis; UDP-alpha-D-xylose biosynthesis; UDP-alpha-D-xylose from UDP-alpha-D-glucuronate: step 1/1.</text>
</comment>
<comment type="subunit">
    <text evidence="1 3">Homodimer and homotetramer (By similarity). Interacts with AKT1 (PubMed:11877387).</text>
</comment>
<comment type="subcellular location">
    <subcellularLocation>
        <location evidence="3">Golgi apparatus</location>
        <location evidence="3">Golgi stack membrane</location>
        <topology evidence="5">Single-pass type II membrane protein</topology>
    </subcellularLocation>
</comment>
<comment type="tissue specificity">
    <text evidence="3">Ubiquitous. Detected in heart, brain, spleen, lung, testis, liver, skeletal muscle and kidney.</text>
</comment>
<comment type="similarity">
    <text evidence="5">Belongs to the NAD(P)-dependent epimerase/dehydratase family. UDP-glucuronic acid decarboxylase subfamily.</text>
</comment>
<accession>Q5PQX0</accession>
<accession>Q8K464</accession>
<protein>
    <recommendedName>
        <fullName evidence="4">UDP-glucuronic acid decarboxylase 1</fullName>
        <ecNumber evidence="3">4.1.1.35</ecNumber>
    </recommendedName>
    <alternativeName>
        <fullName>UDP-glucuronate decarboxylase 1</fullName>
        <shortName>UGD</shortName>
        <shortName>UXS-1</shortName>
    </alternativeName>
</protein>
<organism>
    <name type="scientific">Rattus norvegicus</name>
    <name type="common">Rat</name>
    <dbReference type="NCBI Taxonomy" id="10116"/>
    <lineage>
        <taxon>Eukaryota</taxon>
        <taxon>Metazoa</taxon>
        <taxon>Chordata</taxon>
        <taxon>Craniata</taxon>
        <taxon>Vertebrata</taxon>
        <taxon>Euteleostomi</taxon>
        <taxon>Mammalia</taxon>
        <taxon>Eutheria</taxon>
        <taxon>Euarchontoglires</taxon>
        <taxon>Glires</taxon>
        <taxon>Rodentia</taxon>
        <taxon>Myomorpha</taxon>
        <taxon>Muroidea</taxon>
        <taxon>Muridae</taxon>
        <taxon>Murinae</taxon>
        <taxon>Rattus</taxon>
    </lineage>
</organism>
<reference key="1">
    <citation type="journal article" date="2002" name="J. Biol. Chem.">
        <title>UDP-glucuronate decarboxylase, a key enzyme in proteoglycan synthesis. Cloning, characterization, and localization.</title>
        <authorList>
            <person name="Moriarity J.L."/>
            <person name="Hurt K.J."/>
            <person name="Resnick A.C."/>
            <person name="Storm P.B."/>
            <person name="Laroy W."/>
            <person name="Schnaar R.L."/>
            <person name="Snyder S.H."/>
        </authorList>
    </citation>
    <scope>NUCLEOTIDE SEQUENCE [MRNA]</scope>
    <scope>FUNCTION</scope>
    <scope>INTERACTION WITH AKT1</scope>
    <scope>SUBCELLULAR LOCATION</scope>
    <scope>TISSUE SPECIFICITY</scope>
    <scope>CATALYTIC ACTIVITY</scope>
    <source>
        <strain>Sprague-Dawley</strain>
        <tissue>Brain</tissue>
    </source>
</reference>
<reference key="2">
    <citation type="journal article" date="2004" name="Genome Res.">
        <title>The status, quality, and expansion of the NIH full-length cDNA project: the Mammalian Gene Collection (MGC).</title>
        <authorList>
            <consortium name="The MGC Project Team"/>
        </authorList>
    </citation>
    <scope>NUCLEOTIDE SEQUENCE [LARGE SCALE MRNA]</scope>
    <source>
        <tissue>Heart</tissue>
    </source>
</reference>
<name>UXS1_RAT</name>
<gene>
    <name evidence="7" type="primary">Uxs1</name>
</gene>
<sequence length="420" mass="47539">MVSKGLLRLVSSVNRRKMKLLLGIALFAYAASVWGNFVNMRSIQENGELKIESKIEEIIEPLREKIRDLEKSFTQKYPPVKFLSEKDRKRILITGGAGFVGSHLTDKLMMDGHEVTVVDNFFTGRKRNVEHWIGHENFELINHDVVEPLYIEVDQIYHLASPASPPNYMYNPIKTLKTNTIGTLNMLGLAKRVGARLLLASTSEVYGDPEVHPQSEDYWGHVNPIGPRACYDEGKRVAETMCYAYMKQEGVEVRVARIFNTFGPRMHMNDGRVVSNFILQALQGEPLTVYGSGSQTRAFQYVSDLVNGLVALMNSNVSSPVNLGNPEEHTILEFAQLIKNLVGSGSEIQFLSEAQDDPQKRKPDIKKAKLMLGWEPVVPLEEGLNKAIHYFRKELEYQANNQYIPKPKPARVKKGRTRHS</sequence>